<keyword id="KW-0342">GTP-binding</keyword>
<keyword id="KW-0378">Hydrolase</keyword>
<keyword id="KW-0533">Nickel</keyword>
<keyword id="KW-0547">Nucleotide-binding</keyword>
<evidence type="ECO:0000255" key="1">
    <source>
        <dbReference type="HAMAP-Rule" id="MF_01443"/>
    </source>
</evidence>
<gene>
    <name evidence="1" type="primary">prpE</name>
    <name type="ordered locus">BAA_1292</name>
</gene>
<protein>
    <recommendedName>
        <fullName evidence="1">Bis(5'-nucleosyl)-tetraphosphatase PrpE [asymmetrical]</fullName>
        <ecNumber evidence="1">3.6.1.17</ecNumber>
    </recommendedName>
    <alternativeName>
        <fullName evidence="1">Ap4A hydrolase</fullName>
    </alternativeName>
    <alternativeName>
        <fullName evidence="1">Diadenosine 5',5'''-P1,P4-tetraphosphate asymmetrical hydrolase</fullName>
        <shortName evidence="1">Diadenosine tetraphosphatase</shortName>
    </alternativeName>
</protein>
<proteinExistence type="inferred from homology"/>
<organism>
    <name type="scientific">Bacillus anthracis (strain A0248)</name>
    <dbReference type="NCBI Taxonomy" id="592021"/>
    <lineage>
        <taxon>Bacteria</taxon>
        <taxon>Bacillati</taxon>
        <taxon>Bacillota</taxon>
        <taxon>Bacilli</taxon>
        <taxon>Bacillales</taxon>
        <taxon>Bacillaceae</taxon>
        <taxon>Bacillus</taxon>
        <taxon>Bacillus cereus group</taxon>
    </lineage>
</organism>
<reference key="1">
    <citation type="submission" date="2009-04" db="EMBL/GenBank/DDBJ databases">
        <title>Genome sequence of Bacillus anthracis A0248.</title>
        <authorList>
            <person name="Dodson R.J."/>
            <person name="Munk A.C."/>
            <person name="Bruce D."/>
            <person name="Detter C."/>
            <person name="Tapia R."/>
            <person name="Sutton G."/>
            <person name="Sims D."/>
            <person name="Brettin T."/>
        </authorList>
    </citation>
    <scope>NUCLEOTIDE SEQUENCE [LARGE SCALE GENOMIC DNA]</scope>
    <source>
        <strain>A0248</strain>
    </source>
</reference>
<name>PRPE_BACAA</name>
<comment type="function">
    <text evidence="1">Asymmetrically hydrolyzes Ap4p to yield AMP and ATP.</text>
</comment>
<comment type="catalytic activity">
    <reaction evidence="1">
        <text>P(1),P(4)-bis(5'-guanosyl) tetraphosphate + H2O = GMP + GTP + 2 H(+)</text>
        <dbReference type="Rhea" id="RHEA:22484"/>
        <dbReference type="ChEBI" id="CHEBI:15377"/>
        <dbReference type="ChEBI" id="CHEBI:15378"/>
        <dbReference type="ChEBI" id="CHEBI:37565"/>
        <dbReference type="ChEBI" id="CHEBI:57553"/>
        <dbReference type="ChEBI" id="CHEBI:58115"/>
        <dbReference type="EC" id="3.6.1.17"/>
    </reaction>
</comment>
<comment type="cofactor">
    <cofactor evidence="1">
        <name>Ni(2+)</name>
        <dbReference type="ChEBI" id="CHEBI:49786"/>
    </cofactor>
</comment>
<comment type="similarity">
    <text evidence="1">Belongs to the PrpE family.</text>
</comment>
<accession>C3P3Q5</accession>
<feature type="chain" id="PRO_1000184941" description="Bis(5'-nucleosyl)-tetraphosphatase PrpE [asymmetrical]">
    <location>
        <begin position="1"/>
        <end position="246"/>
    </location>
</feature>
<sequence length="246" mass="28269">MKYDIIGDIHGCLQEFQNLTEKLGYNWSSGLPVHPDQRKLAFVGDITDRGPHSLRMIEIVWELVIHKKVAYYAPGNHCNKLYRFFLGRNVTIAHGLETTVAEYEALPSHKQNMIKEKFITLYEQSPLYHILDEKRLLVCHAGIRQDYIGRQDKKVQTFVLYGDITGEKHADGSPVRRDWAKEYKGTTWIVYGHTPVKEPRFVNHTVNIDTGAVFGGRLTALRYPEMETVSVPSSLPFVPEKFRPIS</sequence>
<dbReference type="EC" id="3.6.1.17" evidence="1"/>
<dbReference type="EMBL" id="CP001598">
    <property type="protein sequence ID" value="ACQ47392.1"/>
    <property type="molecule type" value="Genomic_DNA"/>
</dbReference>
<dbReference type="RefSeq" id="WP_000872719.1">
    <property type="nucleotide sequence ID" value="NC_012659.1"/>
</dbReference>
<dbReference type="SMR" id="C3P3Q5"/>
<dbReference type="GeneID" id="45021219"/>
<dbReference type="KEGG" id="bai:BAA_1292"/>
<dbReference type="HOGENOM" id="CLU_023125_3_0_9"/>
<dbReference type="GO" id="GO:0005737">
    <property type="term" value="C:cytoplasm"/>
    <property type="evidence" value="ECO:0007669"/>
    <property type="project" value="TreeGrafter"/>
</dbReference>
<dbReference type="GO" id="GO:0004081">
    <property type="term" value="F:bis(5'-nucleosyl)-tetraphosphatase (asymmetrical) activity"/>
    <property type="evidence" value="ECO:0007669"/>
    <property type="project" value="UniProtKB-UniRule"/>
</dbReference>
<dbReference type="GO" id="GO:0005525">
    <property type="term" value="F:GTP binding"/>
    <property type="evidence" value="ECO:0007669"/>
    <property type="project" value="UniProtKB-KW"/>
</dbReference>
<dbReference type="GO" id="GO:0016151">
    <property type="term" value="F:nickel cation binding"/>
    <property type="evidence" value="ECO:0007669"/>
    <property type="project" value="UniProtKB-UniRule"/>
</dbReference>
<dbReference type="GO" id="GO:0016791">
    <property type="term" value="F:phosphatase activity"/>
    <property type="evidence" value="ECO:0007669"/>
    <property type="project" value="TreeGrafter"/>
</dbReference>
<dbReference type="CDD" id="cd07423">
    <property type="entry name" value="MPP_Prp_like"/>
    <property type="match status" value="1"/>
</dbReference>
<dbReference type="Gene3D" id="3.60.21.10">
    <property type="match status" value="1"/>
</dbReference>
<dbReference type="HAMAP" id="MF_01443">
    <property type="entry name" value="PrpE"/>
    <property type="match status" value="1"/>
</dbReference>
<dbReference type="InterPro" id="IPR050126">
    <property type="entry name" value="Ap4A_hydrolase"/>
</dbReference>
<dbReference type="InterPro" id="IPR023937">
    <property type="entry name" value="Bis(5'-nucleosyl)-tetraP_PrpE"/>
</dbReference>
<dbReference type="InterPro" id="IPR004843">
    <property type="entry name" value="Calcineurin-like_PHP_ApaH"/>
</dbReference>
<dbReference type="InterPro" id="IPR029052">
    <property type="entry name" value="Metallo-depent_PP-like"/>
</dbReference>
<dbReference type="InterPro" id="IPR041780">
    <property type="entry name" value="MPP_PrpE-like"/>
</dbReference>
<dbReference type="NCBIfam" id="NF010148">
    <property type="entry name" value="PRK13625.1"/>
    <property type="match status" value="1"/>
</dbReference>
<dbReference type="PANTHER" id="PTHR42850:SF7">
    <property type="entry name" value="BIS(5'-NUCLEOSYL)-TETRAPHOSPHATASE PRPE [ASYMMETRICAL]"/>
    <property type="match status" value="1"/>
</dbReference>
<dbReference type="PANTHER" id="PTHR42850">
    <property type="entry name" value="METALLOPHOSPHOESTERASE"/>
    <property type="match status" value="1"/>
</dbReference>
<dbReference type="Pfam" id="PF00149">
    <property type="entry name" value="Metallophos"/>
    <property type="match status" value="1"/>
</dbReference>
<dbReference type="SUPFAM" id="SSF56300">
    <property type="entry name" value="Metallo-dependent phosphatases"/>
    <property type="match status" value="1"/>
</dbReference>